<organismHost>
    <name type="scientific">Escherichia coli</name>
    <dbReference type="NCBI Taxonomy" id="562"/>
</organismHost>
<sequence length="527" mass="56205">MSNNTYQHVSNESRYVKFDPTDTNFPPEITDVQAAIAAISPAGVNGVPDASSTTKGILFIPTEQEVIDGTNNTKAVTPATLATRLSYPNATETVYGLTRYSTNDEAIAGVNNESSITPAKFTVALNNAFETRVSTESSNGVIKISSLPQALAGADDTTAMTPLKTQQLAIKLIAQIAPSETTATESDQGVVQLATVAQVRQGTLREGYAISPYTFMNSSSTEEYKGVIKLGTQSEVNSNNASVAVTGATLNGRGSTTSMRGVVKLTTTAGSQSGGDASSALAWNADVIQQRGGQIIYGTLRIEDTFTIANGGANITGTVRMTGGYIQGNRIVTQNEIDRTIPVGAIMMWAADSLPSDAWRFCHGGTVSASDCPLYASRIGTRYGGNPSNPGLPDMRGLFVRGSGRGSHLTNPNVNGNDQFGKPRLGVGCTGGYVGEVQIQQMSYHKHAGGFGEHDDLGAFGNTRRSNFVGTRKGLDWDNRSYFTNDGYEIDPESQRNSKYTLNRPELIGNETRPWNISLNYIIKVKE</sequence>
<reference key="1">
    <citation type="journal article" date="1988" name="Nucleic Acids Res.">
        <title>Nucleotide and deduced amino acid sequence of bacteriophage T4 gene 12.</title>
        <authorList>
            <person name="Selivanov N.A."/>
            <person name="Prilipov A.G."/>
            <person name="Mesyanzhinov V.V."/>
        </authorList>
    </citation>
    <scope>NUCLEOTIDE SEQUENCE [GENOMIC DNA]</scope>
    <source>
        <strain>D</strain>
    </source>
</reference>
<reference key="2">
    <citation type="journal article" date="2003" name="Microbiol. Mol. Biol. Rev.">
        <title>Bacteriophage T4 genome.</title>
        <authorList>
            <person name="Miller E.S."/>
            <person name="Kutter E."/>
            <person name="Mosig G."/>
            <person name="Arisaka F."/>
            <person name="Kunisawa T."/>
            <person name="Ruger W."/>
        </authorList>
    </citation>
    <scope>NUCLEOTIDE SEQUENCE [LARGE SCALE GENOMIC DNA]</scope>
</reference>
<reference key="3">
    <citation type="journal article" date="1989" name="DNA">
        <title>Using transposon Tn5 insertions to sequence bacteriophage T4 gene 11.</title>
        <authorList>
            <person name="Barrett B.K."/>
            <person name="Berget P.B."/>
        </authorList>
    </citation>
    <scope>NUCLEOTIDE SEQUENCE [GENOMIC DNA] OF 1-57</scope>
    <source>
        <strain>D</strain>
    </source>
</reference>
<reference key="4">
    <citation type="journal article" date="1989" name="Nucleic Acids Res.">
        <title>Nucleotide sequences of bacteriophage T4 genes 9, 10 and 11.</title>
        <authorList>
            <person name="Prilipov A.G."/>
            <person name="Selivanov N.A."/>
            <person name="Efimov V.P."/>
            <person name="Marusich E.I."/>
            <person name="Mesyanzhinov V.V."/>
        </authorList>
    </citation>
    <scope>NUCLEOTIDE SEQUENCE [GENOMIC DNA] OF 1-4</scope>
    <source>
        <strain>D</strain>
    </source>
</reference>
<reference key="5">
    <citation type="journal article" date="2003" name="J. Bacteriol.">
        <title>Homotrimeric, beta-stranded viral adhesins and tail proteins.</title>
        <authorList>
            <person name="Weigele P.R."/>
            <person name="Scanlon E."/>
            <person name="King J."/>
        </authorList>
    </citation>
    <scope>FUNCTION</scope>
</reference>
<reference key="6">
    <citation type="journal article" date="2001" name="J. Mol. Biol.">
        <title>Crystal structure of a heat and protease-stable part of the bacteriophage T4 short tail fibre.</title>
        <authorList>
            <person name="van Raaij M.J."/>
            <person name="Schoehn G."/>
            <person name="Burda M.R."/>
            <person name="Miller S."/>
        </authorList>
    </citation>
    <scope>X-RAY CRYSTALLOGRAPHY (1.9 ANGSTROMS) OF 250-527</scope>
    <scope>SUBUNIT</scope>
</reference>
<reference key="7">
    <citation type="journal article" date="2016" name="Nature">
        <title>Structure of the T4 baseplate and its function in triggering sheath contraction.</title>
        <authorList>
            <person name="Taylor N.M."/>
            <person name="Prokhorov N.S."/>
            <person name="Guerrero-Ferreira R.C."/>
            <person name="Shneider M.M."/>
            <person name="Browning C."/>
            <person name="Goldie K.N."/>
            <person name="Stahlberg H."/>
            <person name="Leiman P.G."/>
        </authorList>
    </citation>
    <scope>STRUCTURE BY ELECTRON MICROSCOPY (4.11 ANGSTROMS)</scope>
    <scope>SUBUNIT</scope>
    <scope>SUBCELLULAR LOCATION</scope>
    <scope>FUNCTION</scope>
</reference>
<name>FIB12_BPT4</name>
<accession>P10930</accession>
<organism>
    <name type="scientific">Enterobacteria phage T4</name>
    <name type="common">Bacteriophage T4</name>
    <dbReference type="NCBI Taxonomy" id="10665"/>
    <lineage>
        <taxon>Viruses</taxon>
        <taxon>Duplodnaviria</taxon>
        <taxon>Heunggongvirae</taxon>
        <taxon>Uroviricota</taxon>
        <taxon>Caudoviricetes</taxon>
        <taxon>Straboviridae</taxon>
        <taxon>Tevenvirinae</taxon>
        <taxon>Tequatrovirus</taxon>
    </lineage>
</organism>
<gene>
    <name type="primary">12</name>
</gene>
<dbReference type="EMBL" id="X06792">
    <property type="protein sequence ID" value="CAA29951.1"/>
    <property type="molecule type" value="Genomic_DNA"/>
</dbReference>
<dbReference type="EMBL" id="AF158101">
    <property type="protein sequence ID" value="AAD42417.1"/>
    <property type="molecule type" value="Genomic_DNA"/>
</dbReference>
<dbReference type="EMBL" id="M26253">
    <property type="protein sequence ID" value="AAA32495.1"/>
    <property type="molecule type" value="Genomic_DNA"/>
</dbReference>
<dbReference type="EMBL" id="X14192">
    <property type="protein sequence ID" value="CAA32398.1"/>
    <property type="molecule type" value="Genomic_DNA"/>
</dbReference>
<dbReference type="PIR" id="C32479">
    <property type="entry name" value="C32479"/>
</dbReference>
<dbReference type="PIR" id="S01889">
    <property type="entry name" value="GIBPT4"/>
</dbReference>
<dbReference type="RefSeq" id="NP_049770.1">
    <property type="nucleotide sequence ID" value="NC_000866.4"/>
</dbReference>
<dbReference type="PDB" id="1OCY">
    <property type="method" value="X-ray"/>
    <property type="resolution" value="1.50 A"/>
    <property type="chains" value="A=332-527"/>
</dbReference>
<dbReference type="PDB" id="1PDI">
    <property type="method" value="EM"/>
    <property type="resolution" value="12.00 A"/>
    <property type="chains" value="A/B/C/D/E/F/G/H/I/J/K/L/M/N/O/P/Q/R=250-527"/>
</dbReference>
<dbReference type="PDB" id="5IV5">
    <property type="method" value="EM"/>
    <property type="resolution" value="4.11 A"/>
    <property type="chains" value="AI/AJ/BA/DB/DC/DD/FE/FF/FG/HH/HI/HJ/O/P/Q/l/m/n=1-527"/>
</dbReference>
<dbReference type="PDB" id="5LYE">
    <property type="method" value="X-ray"/>
    <property type="resolution" value="1.90 A"/>
    <property type="chains" value="A=85-396, B=518-527"/>
</dbReference>
<dbReference type="PDBsum" id="1OCY"/>
<dbReference type="PDBsum" id="1PDI"/>
<dbReference type="PDBsum" id="5IV5"/>
<dbReference type="PDBsum" id="5LYE"/>
<dbReference type="SMR" id="P10930"/>
<dbReference type="DrugBank" id="DB04272">
    <property type="generic name" value="Citric acid"/>
</dbReference>
<dbReference type="TCDB" id="1.K.1.1.1">
    <property type="family name" value="the gp27/5 t4-baseplate (t4-bp) family"/>
</dbReference>
<dbReference type="GeneID" id="1258789"/>
<dbReference type="KEGG" id="vg:1258789"/>
<dbReference type="OrthoDB" id="3474at10239"/>
<dbReference type="EvolutionaryTrace" id="P10930"/>
<dbReference type="Proteomes" id="UP000009087">
    <property type="component" value="Segment"/>
</dbReference>
<dbReference type="GO" id="GO:0098025">
    <property type="term" value="C:virus tail, baseplate"/>
    <property type="evidence" value="ECO:0000314"/>
    <property type="project" value="UniProtKB"/>
</dbReference>
<dbReference type="GO" id="GO:0098024">
    <property type="term" value="C:virus tail, fiber"/>
    <property type="evidence" value="ECO:0007669"/>
    <property type="project" value="UniProtKB-KW"/>
</dbReference>
<dbReference type="GO" id="GO:0046872">
    <property type="term" value="F:metal ion binding"/>
    <property type="evidence" value="ECO:0007669"/>
    <property type="project" value="InterPro"/>
</dbReference>
<dbReference type="GO" id="GO:0098670">
    <property type="term" value="P:entry receptor-mediated virion attachment to host cell"/>
    <property type="evidence" value="ECO:0007669"/>
    <property type="project" value="UniProtKB-KW"/>
</dbReference>
<dbReference type="GO" id="GO:0046718">
    <property type="term" value="P:symbiont entry into host cell"/>
    <property type="evidence" value="ECO:0007669"/>
    <property type="project" value="UniProtKB-KW"/>
</dbReference>
<dbReference type="Gene3D" id="2.10.280.10">
    <property type="entry name" value="heat- and protease-stable fragment of the bacteriophage t4 short fibre, domain 1"/>
    <property type="match status" value="1"/>
</dbReference>
<dbReference type="Gene3D" id="2.160.30.10">
    <property type="entry name" value="heat- and protease-stable fragment of the bacteriophage t4 short fibre, domain 2"/>
    <property type="match status" value="1"/>
</dbReference>
<dbReference type="Gene3D" id="3.90.1340.10">
    <property type="entry name" value="Phage tail collar domain"/>
    <property type="match status" value="1"/>
</dbReference>
<dbReference type="Gene3D" id="4.10.1070.10">
    <property type="entry name" value="receptor-binding domain of the bacteriophage t4 short tail fibre, domain 2"/>
    <property type="match status" value="1"/>
</dbReference>
<dbReference type="InterPro" id="IPR015173">
    <property type="entry name" value="Phage_T4_Gp12"/>
</dbReference>
<dbReference type="InterPro" id="IPR011083">
    <property type="entry name" value="Phage_tail_collar_dom"/>
</dbReference>
<dbReference type="InterPro" id="IPR037053">
    <property type="entry name" value="Phage_tail_collar_dom_sf"/>
</dbReference>
<dbReference type="InterPro" id="IPR027448">
    <property type="entry name" value="Short_tail_fibre_C"/>
</dbReference>
<dbReference type="InterPro" id="IPR044916">
    <property type="entry name" value="Short_tail_fibre_C_sf"/>
</dbReference>
<dbReference type="Pfam" id="PF07484">
    <property type="entry name" value="Collar"/>
    <property type="match status" value="1"/>
</dbReference>
<dbReference type="Pfam" id="PF09089">
    <property type="entry name" value="gp12-short_mid"/>
    <property type="match status" value="1"/>
</dbReference>
<dbReference type="Pfam" id="PF14928">
    <property type="entry name" value="S_tail_recep_bd"/>
    <property type="match status" value="1"/>
</dbReference>
<dbReference type="SUPFAM" id="SSF69349">
    <property type="entry name" value="Phage fibre proteins"/>
    <property type="match status" value="1"/>
</dbReference>
<dbReference type="SUPFAM" id="SSF88874">
    <property type="entry name" value="Receptor-binding domain of short tail fibre protein gp12"/>
    <property type="match status" value="1"/>
</dbReference>
<feature type="chain" id="PRO_0000165002" description="Short tail fiber protein gp12">
    <location>
        <begin position="1"/>
        <end position="527"/>
    </location>
</feature>
<feature type="sequence conflict" description="In Ref. 1; CAA29951 and 2; AAD42417." evidence="4" ref="1 2">
    <original>Q</original>
    <variation>H</variation>
    <location>
        <position position="33"/>
    </location>
</feature>
<feature type="helix" evidence="5">
    <location>
        <begin position="335"/>
        <end position="340"/>
    </location>
</feature>
<feature type="strand" evidence="5">
    <location>
        <begin position="346"/>
        <end position="353"/>
    </location>
</feature>
<feature type="strand" evidence="5">
    <location>
        <begin position="359"/>
        <end position="364"/>
    </location>
</feature>
<feature type="turn" evidence="5">
    <location>
        <begin position="369"/>
        <end position="371"/>
    </location>
</feature>
<feature type="helix" evidence="5">
    <location>
        <begin position="373"/>
        <end position="378"/>
    </location>
</feature>
<feature type="turn" evidence="5">
    <location>
        <begin position="379"/>
        <end position="383"/>
    </location>
</feature>
<feature type="strand" evidence="5">
    <location>
        <begin position="387"/>
        <end position="391"/>
    </location>
</feature>
<feature type="helix" evidence="5">
    <location>
        <begin position="407"/>
        <end position="410"/>
    </location>
</feature>
<feature type="helix" evidence="5">
    <location>
        <begin position="412"/>
        <end position="414"/>
    </location>
</feature>
<feature type="strand" evidence="5">
    <location>
        <begin position="415"/>
        <end position="417"/>
    </location>
</feature>
<feature type="turn" evidence="5">
    <location>
        <begin position="425"/>
        <end position="428"/>
    </location>
</feature>
<feature type="strand" evidence="5">
    <location>
        <begin position="454"/>
        <end position="456"/>
    </location>
</feature>
<feature type="strand" evidence="5">
    <location>
        <begin position="465"/>
        <end position="467"/>
    </location>
</feature>
<feature type="helix" evidence="5">
    <location>
        <begin position="493"/>
        <end position="495"/>
    </location>
</feature>
<feature type="helix" evidence="5">
    <location>
        <begin position="498"/>
        <end position="500"/>
    </location>
</feature>
<feature type="strand" evidence="5">
    <location>
        <begin position="508"/>
        <end position="510"/>
    </location>
</feature>
<feature type="strand" evidence="5">
    <location>
        <begin position="520"/>
        <end position="524"/>
    </location>
</feature>
<comment type="function">
    <text evidence="2 3">Structural component of the short tail fiber. Adhesion protein that binds irreversibly to the lipopolysaccharides component (LPS) on the cell surface of Escherichia coli B strains during virus attachment. After at least three long tail fibers have bound, short tail fibers extend and bind irreversibly to the core region of the host cell LPS.</text>
</comment>
<comment type="subunit">
    <text evidence="1 3">Homotrimer.</text>
</comment>
<comment type="subcellular location">
    <subcellularLocation>
        <location evidence="3">Virion</location>
    </subcellularLocation>
</comment>
<comment type="similarity">
    <text evidence="4">Belongs to the tevenvirinae short tail fiber protein family.</text>
</comment>
<evidence type="ECO:0000269" key="1">
    <source>
    </source>
</evidence>
<evidence type="ECO:0000269" key="2">
    <source>
    </source>
</evidence>
<evidence type="ECO:0000269" key="3">
    <source>
    </source>
</evidence>
<evidence type="ECO:0000305" key="4"/>
<evidence type="ECO:0007829" key="5">
    <source>
        <dbReference type="PDB" id="1OCY"/>
    </source>
</evidence>
<protein>
    <recommendedName>
        <fullName>Short tail fiber protein gp12</fullName>
    </recommendedName>
    <alternativeName>
        <fullName>Gene product 12</fullName>
        <shortName>gp12</shortName>
    </alternativeName>
</protein>
<proteinExistence type="evidence at protein level"/>
<keyword id="KW-0002">3D-structure</keyword>
<keyword id="KW-0945">Host-virus interaction</keyword>
<keyword id="KW-0426">Late protein</keyword>
<keyword id="KW-1185">Reference proteome</keyword>
<keyword id="KW-1161">Viral attachment to host cell</keyword>
<keyword id="KW-1234">Viral attachment to host entry receptor</keyword>
<keyword id="KW-1230">Viral tail fiber protein</keyword>
<keyword id="KW-1227">Viral tail protein</keyword>
<keyword id="KW-0946">Virion</keyword>
<keyword id="KW-1160">Virus entry into host cell</keyword>